<dbReference type="EMBL" id="AL022341">
    <property type="status" value="NOT_ANNOTATED_CDS"/>
    <property type="molecule type" value="Genomic_DNA"/>
</dbReference>
<dbReference type="EMBL" id="BC001912">
    <property type="protein sequence ID" value="AAH01912.2"/>
    <property type="molecule type" value="mRNA"/>
</dbReference>
<dbReference type="EMBL" id="BC007346">
    <property type="status" value="NOT_ANNOTATED_CDS"/>
    <property type="molecule type" value="mRNA"/>
</dbReference>
<dbReference type="EMBL" id="BC111391">
    <property type="protein sequence ID" value="AAI11392.1"/>
    <property type="molecule type" value="mRNA"/>
</dbReference>
<dbReference type="CCDS" id="CCDS10415.1">
    <molecule id="Q9BUT9-1"/>
</dbReference>
<dbReference type="RefSeq" id="NP_001318158.1">
    <property type="nucleotide sequence ID" value="NM_001331229.1"/>
</dbReference>
<dbReference type="RefSeq" id="NP_001318159.1">
    <property type="nucleotide sequence ID" value="NM_001331230.1"/>
</dbReference>
<dbReference type="RefSeq" id="NP_612427.2">
    <molecule id="Q9BUT9-1"/>
    <property type="nucleotide sequence ID" value="NM_138418.3"/>
</dbReference>
<dbReference type="SMR" id="Q9BUT9"/>
<dbReference type="BioGRID" id="124055">
    <property type="interactions" value="58"/>
</dbReference>
<dbReference type="FunCoup" id="Q9BUT9">
    <property type="interactions" value="827"/>
</dbReference>
<dbReference type="IntAct" id="Q9BUT9">
    <property type="interactions" value="21"/>
</dbReference>
<dbReference type="STRING" id="9606.ENSP00000305138"/>
<dbReference type="GlyGen" id="Q9BUT9">
    <property type="glycosylation" value="1 site, 1 O-linked glycan (1 site)"/>
</dbReference>
<dbReference type="iPTMnet" id="Q9BUT9"/>
<dbReference type="PhosphoSitePlus" id="Q9BUT9"/>
<dbReference type="BioMuta" id="MCRIP2"/>
<dbReference type="DMDM" id="74752367"/>
<dbReference type="jPOST" id="Q9BUT9"/>
<dbReference type="MassIVE" id="Q9BUT9"/>
<dbReference type="PaxDb" id="9606-ENSP00000305138"/>
<dbReference type="PeptideAtlas" id="Q9BUT9"/>
<dbReference type="ProteomicsDB" id="79128">
    <molecule id="Q9BUT9-1"/>
</dbReference>
<dbReference type="ProteomicsDB" id="79129">
    <molecule id="Q9BUT9-2"/>
</dbReference>
<dbReference type="Pumba" id="Q9BUT9"/>
<dbReference type="Antibodypedia" id="42373">
    <property type="antibodies" value="23 antibodies from 14 providers"/>
</dbReference>
<dbReference type="DNASU" id="84331"/>
<dbReference type="Ensembl" id="ENST00000307650.9">
    <molecule id="Q9BUT9-1"/>
    <property type="protein sequence ID" value="ENSP00000305138.4"/>
    <property type="gene ID" value="ENSG00000172366.20"/>
</dbReference>
<dbReference type="Ensembl" id="ENST00000474840.5">
    <molecule id="Q9BUT9-2"/>
    <property type="protein sequence ID" value="ENSP00000433876.1"/>
    <property type="gene ID" value="ENSG00000172366.20"/>
</dbReference>
<dbReference type="GeneID" id="84331"/>
<dbReference type="KEGG" id="hsa:84331"/>
<dbReference type="MANE-Select" id="ENST00000307650.9">
    <property type="protein sequence ID" value="ENSP00000305138.4"/>
    <property type="RefSeq nucleotide sequence ID" value="NM_138418.4"/>
    <property type="RefSeq protein sequence ID" value="NP_612427.2"/>
</dbReference>
<dbReference type="UCSC" id="uc002cic.2">
    <molecule id="Q9BUT9-1"/>
    <property type="organism name" value="human"/>
</dbReference>
<dbReference type="AGR" id="HGNC:14142"/>
<dbReference type="CTD" id="84331"/>
<dbReference type="DisGeNET" id="84331"/>
<dbReference type="GeneCards" id="MCRIP2"/>
<dbReference type="HGNC" id="HGNC:14142">
    <property type="gene designation" value="MCRIP2"/>
</dbReference>
<dbReference type="HPA" id="ENSG00000172366">
    <property type="expression patterns" value="Tissue enhanced (heart muscle, liver)"/>
</dbReference>
<dbReference type="neXtProt" id="NX_Q9BUT9"/>
<dbReference type="OpenTargets" id="ENSG00000172366"/>
<dbReference type="PharmGKB" id="PA25527"/>
<dbReference type="VEuPathDB" id="HostDB:ENSG00000172366"/>
<dbReference type="eggNOG" id="ENOG502RZDA">
    <property type="taxonomic scope" value="Eukaryota"/>
</dbReference>
<dbReference type="GeneTree" id="ENSGT00940000160332"/>
<dbReference type="HOGENOM" id="CLU_121013_0_0_1"/>
<dbReference type="InParanoid" id="Q9BUT9"/>
<dbReference type="OMA" id="YESWNQV"/>
<dbReference type="OrthoDB" id="9983138at2759"/>
<dbReference type="PAN-GO" id="Q9BUT9">
    <property type="GO annotations" value="0 GO annotations based on evolutionary models"/>
</dbReference>
<dbReference type="PhylomeDB" id="Q9BUT9"/>
<dbReference type="TreeFam" id="TF326620"/>
<dbReference type="PathwayCommons" id="Q9BUT9"/>
<dbReference type="SignaLink" id="Q9BUT9"/>
<dbReference type="BioGRID-ORCS" id="84331">
    <property type="hits" value="9 hits in 1153 CRISPR screens"/>
</dbReference>
<dbReference type="CD-CODE" id="232F8A39">
    <property type="entry name" value="P-body"/>
</dbReference>
<dbReference type="CD-CODE" id="DEE660B4">
    <property type="entry name" value="Stress granule"/>
</dbReference>
<dbReference type="ChiTaRS" id="MCRIP2">
    <property type="organism name" value="human"/>
</dbReference>
<dbReference type="GenomeRNAi" id="84331"/>
<dbReference type="Pharos" id="Q9BUT9">
    <property type="development level" value="Tdark"/>
</dbReference>
<dbReference type="PRO" id="PR:Q9BUT9"/>
<dbReference type="Proteomes" id="UP000005640">
    <property type="component" value="Chromosome 16"/>
</dbReference>
<dbReference type="RNAct" id="Q9BUT9">
    <property type="molecule type" value="protein"/>
</dbReference>
<dbReference type="Bgee" id="ENSG00000172366">
    <property type="expression patterns" value="Expressed in mucosa of transverse colon and 177 other cell types or tissues"/>
</dbReference>
<dbReference type="ExpressionAtlas" id="Q9BUT9">
    <property type="expression patterns" value="baseline and differential"/>
</dbReference>
<dbReference type="GO" id="GO:0005737">
    <property type="term" value="C:cytoplasm"/>
    <property type="evidence" value="ECO:0000314"/>
    <property type="project" value="UniProtKB"/>
</dbReference>
<dbReference type="GO" id="GO:0010494">
    <property type="term" value="C:cytoplasmic stress granule"/>
    <property type="evidence" value="ECO:0000314"/>
    <property type="project" value="UniProtKB"/>
</dbReference>
<dbReference type="GO" id="GO:0005634">
    <property type="term" value="C:nucleus"/>
    <property type="evidence" value="ECO:0000314"/>
    <property type="project" value="UniProtKB"/>
</dbReference>
<dbReference type="InterPro" id="IPR029428">
    <property type="entry name" value="MCRIP"/>
</dbReference>
<dbReference type="Pfam" id="PF14799">
    <property type="entry name" value="FAM195"/>
    <property type="match status" value="1"/>
</dbReference>
<feature type="chain" id="PRO_0000274328" description="MAPK regulated corepressor interacting protein 2">
    <location>
        <begin position="1"/>
        <end position="160"/>
    </location>
</feature>
<feature type="region of interest" description="Disordered" evidence="1">
    <location>
        <begin position="1"/>
        <end position="64"/>
    </location>
</feature>
<feature type="compositionally biased region" description="Pro residues" evidence="1">
    <location>
        <begin position="37"/>
        <end position="61"/>
    </location>
</feature>
<feature type="modified residue" description="N-acetylmethionine" evidence="6">
    <location>
        <position position="1"/>
    </location>
</feature>
<feature type="modified residue" description="Omega-N-methylarginine" evidence="8">
    <location>
        <position position="35"/>
    </location>
</feature>
<feature type="modified residue" description="Phosphoserine" evidence="5">
    <location>
        <position position="61"/>
    </location>
</feature>
<feature type="modified residue" description="Omega-N-methylarginine" evidence="8">
    <location>
        <position position="65"/>
    </location>
</feature>
<feature type="modified residue" description="Phosphoserine" evidence="5 7 9">
    <location>
        <position position="82"/>
    </location>
</feature>
<feature type="splice variant" id="VSP_022712" description="In isoform 2." evidence="3">
    <original>PGPRLVFNRVNGRRAPSTSPSFEGTQETYTVAHEENVRFVSEAWQQVQQQLDGGPAGEGGPRPVQYVERTPNPRLQNFVPIDLDEWWAQQFLARITSCS</original>
    <variation>LAAGATAAGWWPSR</variation>
    <location>
        <begin position="62"/>
        <end position="160"/>
    </location>
</feature>
<proteinExistence type="evidence at protein level"/>
<accession>Q9BUT9</accession>
<accession>Q969E9</accession>
<accession>Q96KV8</accession>
<evidence type="ECO:0000256" key="1">
    <source>
        <dbReference type="SAM" id="MobiDB-lite"/>
    </source>
</evidence>
<evidence type="ECO:0000269" key="2">
    <source>
    </source>
</evidence>
<evidence type="ECO:0000303" key="3">
    <source>
    </source>
</evidence>
<evidence type="ECO:0000305" key="4"/>
<evidence type="ECO:0007744" key="5">
    <source>
    </source>
</evidence>
<evidence type="ECO:0007744" key="6">
    <source>
    </source>
</evidence>
<evidence type="ECO:0007744" key="7">
    <source>
    </source>
</evidence>
<evidence type="ECO:0007744" key="8">
    <source>
    </source>
</evidence>
<evidence type="ECO:0007744" key="9">
    <source>
    </source>
</evidence>
<protein>
    <recommendedName>
        <fullName>MAPK regulated corepressor interacting protein 2</fullName>
    </recommendedName>
    <alternativeName>
        <fullName>Protein FAM195A</fullName>
    </alternativeName>
</protein>
<gene>
    <name type="primary">MCRIP2</name>
    <name type="synonym">C16orf14</name>
    <name type="synonym">FAM195A</name>
</gene>
<reference key="1">
    <citation type="journal article" date="2004" name="Nature">
        <title>The sequence and analysis of duplication-rich human chromosome 16.</title>
        <authorList>
            <person name="Martin J."/>
            <person name="Han C."/>
            <person name="Gordon L.A."/>
            <person name="Terry A."/>
            <person name="Prabhakar S."/>
            <person name="She X."/>
            <person name="Xie G."/>
            <person name="Hellsten U."/>
            <person name="Chan Y.M."/>
            <person name="Altherr M."/>
            <person name="Couronne O."/>
            <person name="Aerts A."/>
            <person name="Bajorek E."/>
            <person name="Black S."/>
            <person name="Blumer H."/>
            <person name="Branscomb E."/>
            <person name="Brown N.C."/>
            <person name="Bruno W.J."/>
            <person name="Buckingham J.M."/>
            <person name="Callen D.F."/>
            <person name="Campbell C.S."/>
            <person name="Campbell M.L."/>
            <person name="Campbell E.W."/>
            <person name="Caoile C."/>
            <person name="Challacombe J.F."/>
            <person name="Chasteen L.A."/>
            <person name="Chertkov O."/>
            <person name="Chi H.C."/>
            <person name="Christensen M."/>
            <person name="Clark L.M."/>
            <person name="Cohn J.D."/>
            <person name="Denys M."/>
            <person name="Detter J.C."/>
            <person name="Dickson M."/>
            <person name="Dimitrijevic-Bussod M."/>
            <person name="Escobar J."/>
            <person name="Fawcett J.J."/>
            <person name="Flowers D."/>
            <person name="Fotopulos D."/>
            <person name="Glavina T."/>
            <person name="Gomez M."/>
            <person name="Gonzales E."/>
            <person name="Goodstein D."/>
            <person name="Goodwin L.A."/>
            <person name="Grady D.L."/>
            <person name="Grigoriev I."/>
            <person name="Groza M."/>
            <person name="Hammon N."/>
            <person name="Hawkins T."/>
            <person name="Haydu L."/>
            <person name="Hildebrand C.E."/>
            <person name="Huang W."/>
            <person name="Israni S."/>
            <person name="Jett J."/>
            <person name="Jewett P.B."/>
            <person name="Kadner K."/>
            <person name="Kimball H."/>
            <person name="Kobayashi A."/>
            <person name="Krawczyk M.-C."/>
            <person name="Leyba T."/>
            <person name="Longmire J.L."/>
            <person name="Lopez F."/>
            <person name="Lou Y."/>
            <person name="Lowry S."/>
            <person name="Ludeman T."/>
            <person name="Manohar C.F."/>
            <person name="Mark G.A."/>
            <person name="McMurray K.L."/>
            <person name="Meincke L.J."/>
            <person name="Morgan J."/>
            <person name="Moyzis R.K."/>
            <person name="Mundt M.O."/>
            <person name="Munk A.C."/>
            <person name="Nandkeshwar R.D."/>
            <person name="Pitluck S."/>
            <person name="Pollard M."/>
            <person name="Predki P."/>
            <person name="Parson-Quintana B."/>
            <person name="Ramirez L."/>
            <person name="Rash S."/>
            <person name="Retterer J."/>
            <person name="Ricke D.O."/>
            <person name="Robinson D.L."/>
            <person name="Rodriguez A."/>
            <person name="Salamov A."/>
            <person name="Saunders E.H."/>
            <person name="Scott D."/>
            <person name="Shough T."/>
            <person name="Stallings R.L."/>
            <person name="Stalvey M."/>
            <person name="Sutherland R.D."/>
            <person name="Tapia R."/>
            <person name="Tesmer J.G."/>
            <person name="Thayer N."/>
            <person name="Thompson L.S."/>
            <person name="Tice H."/>
            <person name="Torney D.C."/>
            <person name="Tran-Gyamfi M."/>
            <person name="Tsai M."/>
            <person name="Ulanovsky L.E."/>
            <person name="Ustaszewska A."/>
            <person name="Vo N."/>
            <person name="White P.S."/>
            <person name="Williams A.L."/>
            <person name="Wills P.L."/>
            <person name="Wu J.-R."/>
            <person name="Wu K."/>
            <person name="Yang J."/>
            <person name="DeJong P."/>
            <person name="Bruce D."/>
            <person name="Doggett N.A."/>
            <person name="Deaven L."/>
            <person name="Schmutz J."/>
            <person name="Grimwood J."/>
            <person name="Richardson P."/>
            <person name="Rokhsar D.S."/>
            <person name="Eichler E.E."/>
            <person name="Gilna P."/>
            <person name="Lucas S.M."/>
            <person name="Myers R.M."/>
            <person name="Rubin E.M."/>
            <person name="Pennacchio L.A."/>
        </authorList>
    </citation>
    <scope>NUCLEOTIDE SEQUENCE [LARGE SCALE GENOMIC DNA]</scope>
</reference>
<reference key="2">
    <citation type="journal article" date="2004" name="Genome Res.">
        <title>The status, quality, and expansion of the NIH full-length cDNA project: the Mammalian Gene Collection (MGC).</title>
        <authorList>
            <consortium name="The MGC Project Team"/>
        </authorList>
    </citation>
    <scope>NUCLEOTIDE SEQUENCE [LARGE SCALE MRNA] (ISOFORMS 1 AND 2)</scope>
    <source>
        <tissue>Pancreas</tissue>
        <tissue>Skin</tissue>
    </source>
</reference>
<reference key="3">
    <citation type="journal article" date="2008" name="Proc. Natl. Acad. Sci. U.S.A.">
        <title>A quantitative atlas of mitotic phosphorylation.</title>
        <authorList>
            <person name="Dephoure N."/>
            <person name="Zhou C."/>
            <person name="Villen J."/>
            <person name="Beausoleil S.A."/>
            <person name="Bakalarski C.E."/>
            <person name="Elledge S.J."/>
            <person name="Gygi S.P."/>
        </authorList>
    </citation>
    <scope>PHOSPHORYLATION [LARGE SCALE ANALYSIS] AT SER-61 AND SER-82</scope>
    <scope>IDENTIFICATION BY MASS SPECTROMETRY [LARGE SCALE ANALYSIS]</scope>
    <source>
        <tissue>Cervix carcinoma</tissue>
    </source>
</reference>
<reference key="4">
    <citation type="journal article" date="2010" name="Sci. Signal.">
        <title>Quantitative phosphoproteomics reveals widespread full phosphorylation site occupancy during mitosis.</title>
        <authorList>
            <person name="Olsen J.V."/>
            <person name="Vermeulen M."/>
            <person name="Santamaria A."/>
            <person name="Kumar C."/>
            <person name="Miller M.L."/>
            <person name="Jensen L.J."/>
            <person name="Gnad F."/>
            <person name="Cox J."/>
            <person name="Jensen T.S."/>
            <person name="Nigg E.A."/>
            <person name="Brunak S."/>
            <person name="Mann M."/>
        </authorList>
    </citation>
    <scope>IDENTIFICATION BY MASS SPECTROMETRY [LARGE SCALE ANALYSIS]</scope>
    <source>
        <tissue>Cervix carcinoma</tissue>
    </source>
</reference>
<reference key="5">
    <citation type="journal article" date="2011" name="BMC Syst. Biol.">
        <title>Initial characterization of the human central proteome.</title>
        <authorList>
            <person name="Burkard T.R."/>
            <person name="Planyavsky M."/>
            <person name="Kaupe I."/>
            <person name="Breitwieser F.P."/>
            <person name="Buerckstuemmer T."/>
            <person name="Bennett K.L."/>
            <person name="Superti-Furga G."/>
            <person name="Colinge J."/>
        </authorList>
    </citation>
    <scope>IDENTIFICATION BY MASS SPECTROMETRY [LARGE SCALE ANALYSIS]</scope>
</reference>
<reference key="6">
    <citation type="journal article" date="2012" name="Proc. Natl. Acad. Sci. U.S.A.">
        <title>N-terminal acetylome analyses and functional insights of the N-terminal acetyltransferase NatB.</title>
        <authorList>
            <person name="Van Damme P."/>
            <person name="Lasa M."/>
            <person name="Polevoda B."/>
            <person name="Gazquez C."/>
            <person name="Elosegui-Artola A."/>
            <person name="Kim D.S."/>
            <person name="De Juan-Pardo E."/>
            <person name="Demeyer K."/>
            <person name="Hole K."/>
            <person name="Larrea E."/>
            <person name="Timmerman E."/>
            <person name="Prieto J."/>
            <person name="Arnesen T."/>
            <person name="Sherman F."/>
            <person name="Gevaert K."/>
            <person name="Aldabe R."/>
        </authorList>
    </citation>
    <scope>ACETYLATION [LARGE SCALE ANALYSIS] AT MET-1</scope>
    <scope>IDENTIFICATION BY MASS SPECTROMETRY [LARGE SCALE ANALYSIS]</scope>
</reference>
<reference key="7">
    <citation type="journal article" date="2013" name="J. Proteome Res.">
        <title>Toward a comprehensive characterization of a human cancer cell phosphoproteome.</title>
        <authorList>
            <person name="Zhou H."/>
            <person name="Di Palma S."/>
            <person name="Preisinger C."/>
            <person name="Peng M."/>
            <person name="Polat A.N."/>
            <person name="Heck A.J."/>
            <person name="Mohammed S."/>
        </authorList>
    </citation>
    <scope>PHOSPHORYLATION [LARGE SCALE ANALYSIS] AT SER-82</scope>
    <scope>IDENTIFICATION BY MASS SPECTROMETRY [LARGE SCALE ANALYSIS]</scope>
    <source>
        <tissue>Cervix carcinoma</tissue>
        <tissue>Erythroleukemia</tissue>
    </source>
</reference>
<reference key="8">
    <citation type="journal article" date="2014" name="J. Proteomics">
        <title>An enzyme assisted RP-RPLC approach for in-depth analysis of human liver phosphoproteome.</title>
        <authorList>
            <person name="Bian Y."/>
            <person name="Song C."/>
            <person name="Cheng K."/>
            <person name="Dong M."/>
            <person name="Wang F."/>
            <person name="Huang J."/>
            <person name="Sun D."/>
            <person name="Wang L."/>
            <person name="Ye M."/>
            <person name="Zou H."/>
        </authorList>
    </citation>
    <scope>PHOSPHORYLATION [LARGE SCALE ANALYSIS] AT SER-82</scope>
    <scope>IDENTIFICATION BY MASS SPECTROMETRY [LARGE SCALE ANALYSIS]</scope>
    <source>
        <tissue>Liver</tissue>
    </source>
</reference>
<reference key="9">
    <citation type="journal article" date="2014" name="Mol. Cell. Proteomics">
        <title>Immunoaffinity enrichment and mass spectrometry analysis of protein methylation.</title>
        <authorList>
            <person name="Guo A."/>
            <person name="Gu H."/>
            <person name="Zhou J."/>
            <person name="Mulhern D."/>
            <person name="Wang Y."/>
            <person name="Lee K.A."/>
            <person name="Yang V."/>
            <person name="Aguiar M."/>
            <person name="Kornhauser J."/>
            <person name="Jia X."/>
            <person name="Ren J."/>
            <person name="Beausoleil S.A."/>
            <person name="Silva J.C."/>
            <person name="Vemulapalli V."/>
            <person name="Bedford M.T."/>
            <person name="Comb M.J."/>
        </authorList>
    </citation>
    <scope>METHYLATION [LARGE SCALE ANALYSIS] AT ARG-35 AND ARG-65</scope>
    <scope>IDENTIFICATION BY MASS SPECTROMETRY [LARGE SCALE ANALYSIS]</scope>
    <source>
        <tissue>Colon carcinoma</tissue>
    </source>
</reference>
<reference key="10">
    <citation type="journal article" date="2015" name="Biomolecules">
        <title>Comprehensive protein interactome analysis of a key RNA helicase: detection of novel stress granule proteins.</title>
        <authorList>
            <person name="Bish R."/>
            <person name="Cuevas-Polo N."/>
            <person name="Cheng Z."/>
            <person name="Hambardzumyan D."/>
            <person name="Munschauer M."/>
            <person name="Landthaler M."/>
            <person name="Vogel C."/>
        </authorList>
    </citation>
    <scope>INTERACTION WITH DDX6 AND MCRIP1</scope>
    <scope>SUBCELLULAR LOCATION</scope>
</reference>
<comment type="subunit">
    <text evidence="2">Interacts with DDX6. Interacts with MCRIP1.</text>
</comment>
<comment type="subcellular location">
    <subcellularLocation>
        <location evidence="2">Cytoplasm</location>
        <location evidence="2">Stress granule</location>
    </subcellularLocation>
    <subcellularLocation>
        <location evidence="2">Nucleus</location>
    </subcellularLocation>
</comment>
<comment type="alternative products">
    <event type="alternative splicing"/>
    <isoform>
        <id>Q9BUT9-1</id>
        <name>1</name>
        <sequence type="displayed"/>
    </isoform>
    <isoform>
        <id>Q9BUT9-2</id>
        <name>2</name>
        <sequence type="described" ref="VSP_022712"/>
    </isoform>
</comment>
<comment type="miscellaneous">
    <molecule>Isoform 2</molecule>
    <text evidence="4">May be produced at very low levels due to a premature stop codon in the mRNA, leading to nonsense-mediated mRNA decay.</text>
</comment>
<comment type="similarity">
    <text evidence="4">Belongs to the MCRIP family.</text>
</comment>
<keyword id="KW-0007">Acetylation</keyword>
<keyword id="KW-0025">Alternative splicing</keyword>
<keyword id="KW-0963">Cytoplasm</keyword>
<keyword id="KW-0488">Methylation</keyword>
<keyword id="KW-0539">Nucleus</keyword>
<keyword id="KW-0597">Phosphoprotein</keyword>
<keyword id="KW-1267">Proteomics identification</keyword>
<keyword id="KW-1185">Reference proteome</keyword>
<organism>
    <name type="scientific">Homo sapiens</name>
    <name type="common">Human</name>
    <dbReference type="NCBI Taxonomy" id="9606"/>
    <lineage>
        <taxon>Eukaryota</taxon>
        <taxon>Metazoa</taxon>
        <taxon>Chordata</taxon>
        <taxon>Craniata</taxon>
        <taxon>Vertebrata</taxon>
        <taxon>Euteleostomi</taxon>
        <taxon>Mammalia</taxon>
        <taxon>Eutheria</taxon>
        <taxon>Euarchontoglires</taxon>
        <taxon>Primates</taxon>
        <taxon>Haplorrhini</taxon>
        <taxon>Catarrhini</taxon>
        <taxon>Hominidae</taxon>
        <taxon>Homo</taxon>
    </lineage>
</organism>
<sequence>MYTITKGPSKLVAQRRTGPTQQQVEGRLGELLKCRQPAPPTSQPPRAQPFAQPPGPWPLSSPGPRLVFNRVNGRRAPSTSPSFEGTQETYTVAHEENVRFVSEAWQQVQQQLDGGPAGEGGPRPVQYVERTPNPRLQNFVPIDLDEWWAQQFLARITSCS</sequence>
<name>MCRI2_HUMAN</name>